<reference key="1">
    <citation type="journal article" date="2010" name="J. Bacteriol.">
        <title>Genome sequence of the deep-rooted Yersinia pestis strain Angola reveals new insights into the evolution and pangenome of the plague bacterium.</title>
        <authorList>
            <person name="Eppinger M."/>
            <person name="Worsham P.L."/>
            <person name="Nikolich M.P."/>
            <person name="Riley D.R."/>
            <person name="Sebastian Y."/>
            <person name="Mou S."/>
            <person name="Achtman M."/>
            <person name="Lindler L.E."/>
            <person name="Ravel J."/>
        </authorList>
    </citation>
    <scope>NUCLEOTIDE SEQUENCE [LARGE SCALE GENOMIC DNA]</scope>
    <source>
        <strain>Angola</strain>
    </source>
</reference>
<accession>A9R1E1</accession>
<feature type="signal peptide" evidence="1">
    <location>
        <begin position="1"/>
        <end position="27"/>
    </location>
</feature>
<feature type="chain" id="PRO_1000134570" description="Vitamin B12-binding protein">
    <location>
        <begin position="28"/>
        <end position="280"/>
    </location>
</feature>
<feature type="domain" description="Fe/B12 periplasmic-binding" evidence="1">
    <location>
        <begin position="30"/>
        <end position="277"/>
    </location>
</feature>
<feature type="binding site" evidence="1">
    <location>
        <position position="57"/>
    </location>
    <ligand>
        <name>cyanocob(III)alamin</name>
        <dbReference type="ChEBI" id="CHEBI:17439"/>
    </ligand>
</feature>
<feature type="site" description="Important for BtuC binding" evidence="1">
    <location>
        <position position="79"/>
    </location>
</feature>
<feature type="site" description="Important for BtuC binding" evidence="1">
    <location>
        <position position="209"/>
    </location>
</feature>
<feature type="disulfide bond" evidence="1">
    <location>
        <begin position="190"/>
        <end position="266"/>
    </location>
</feature>
<gene>
    <name evidence="1" type="primary">btuF</name>
    <name type="ordered locus">YpAngola_A0990</name>
</gene>
<protein>
    <recommendedName>
        <fullName evidence="1">Vitamin B12-binding protein</fullName>
    </recommendedName>
</protein>
<keyword id="KW-1015">Disulfide bond</keyword>
<keyword id="KW-0574">Periplasm</keyword>
<keyword id="KW-0732">Signal</keyword>
<keyword id="KW-0813">Transport</keyword>
<comment type="function">
    <text evidence="1">Part of the ABC transporter complex BtuCDF involved in vitamin B12 import. Binds vitamin B12 and delivers it to the periplasmic surface of BtuC.</text>
</comment>
<comment type="subunit">
    <text evidence="1">The complex is composed of two ATP-binding proteins (BtuD), two transmembrane proteins (BtuC) and a solute-binding protein (BtuF).</text>
</comment>
<comment type="subcellular location">
    <subcellularLocation>
        <location evidence="1">Periplasm</location>
    </subcellularLocation>
</comment>
<comment type="similarity">
    <text evidence="1">Belongs to the BtuF family.</text>
</comment>
<sequence>MMPLGLFPLPRAAAVLLISLLTLPAQAAERVISLSPSTTELAYAAGLGDKLVAVSAYSDYPESAKKLEHVASWQGINVERILALKPDLILAWRGGNPQRPLDQLAALGIPIFYSDPTHIDQIASDLDKLAQYSPHPEQAHQAAEQFRQHVNTLRDRYARSQPKRTFLQFGTQPLFTSSGHTLQSEVVSLCGGENIFADSRVPWPQVSREQVMTRKPQVIVVSGTQSQVDNVSAFWLPQLVVPVIALNEDWFNRASPRILLAAQQLCQQMASIPTPVAESH</sequence>
<evidence type="ECO:0000255" key="1">
    <source>
        <dbReference type="HAMAP-Rule" id="MF_01000"/>
    </source>
</evidence>
<dbReference type="EMBL" id="CP000901">
    <property type="protein sequence ID" value="ABX88576.1"/>
    <property type="molecule type" value="Genomic_DNA"/>
</dbReference>
<dbReference type="RefSeq" id="WP_002222100.1">
    <property type="nucleotide sequence ID" value="NZ_CP009935.1"/>
</dbReference>
<dbReference type="SMR" id="A9R1E1"/>
<dbReference type="GeneID" id="57975324"/>
<dbReference type="KEGG" id="ypg:YpAngola_A0990"/>
<dbReference type="GO" id="GO:0042597">
    <property type="term" value="C:periplasmic space"/>
    <property type="evidence" value="ECO:0007669"/>
    <property type="project" value="UniProtKB-SubCell"/>
</dbReference>
<dbReference type="GO" id="GO:0031419">
    <property type="term" value="F:cobalamin binding"/>
    <property type="evidence" value="ECO:0007669"/>
    <property type="project" value="InterPro"/>
</dbReference>
<dbReference type="GO" id="GO:0015889">
    <property type="term" value="P:cobalamin transport"/>
    <property type="evidence" value="ECO:0007669"/>
    <property type="project" value="UniProtKB-UniRule"/>
</dbReference>
<dbReference type="CDD" id="cd01144">
    <property type="entry name" value="BtuF"/>
    <property type="match status" value="1"/>
</dbReference>
<dbReference type="Gene3D" id="3.40.50.1980">
    <property type="entry name" value="Nitrogenase molybdenum iron protein domain"/>
    <property type="match status" value="2"/>
</dbReference>
<dbReference type="HAMAP" id="MF_01000">
    <property type="entry name" value="BtuF"/>
    <property type="match status" value="1"/>
</dbReference>
<dbReference type="InterPro" id="IPR002491">
    <property type="entry name" value="ABC_transptr_periplasmic_BD"/>
</dbReference>
<dbReference type="InterPro" id="IPR023544">
    <property type="entry name" value="ABC_transptr_vit_B12-bd"/>
</dbReference>
<dbReference type="InterPro" id="IPR054828">
    <property type="entry name" value="Vit_B12_bind_prot"/>
</dbReference>
<dbReference type="InterPro" id="IPR051030">
    <property type="entry name" value="Vitamin_B12-ABC_binding"/>
</dbReference>
<dbReference type="NCBIfam" id="NF002894">
    <property type="entry name" value="PRK03379.1"/>
    <property type="match status" value="1"/>
</dbReference>
<dbReference type="NCBIfam" id="NF038402">
    <property type="entry name" value="TroA_like"/>
    <property type="match status" value="1"/>
</dbReference>
<dbReference type="PANTHER" id="PTHR42860">
    <property type="entry name" value="VITAMIN B12-BINDING PROTEIN"/>
    <property type="match status" value="1"/>
</dbReference>
<dbReference type="PANTHER" id="PTHR42860:SF1">
    <property type="entry name" value="VITAMIN B12-BINDING PROTEIN"/>
    <property type="match status" value="1"/>
</dbReference>
<dbReference type="Pfam" id="PF01497">
    <property type="entry name" value="Peripla_BP_2"/>
    <property type="match status" value="1"/>
</dbReference>
<dbReference type="SUPFAM" id="SSF53807">
    <property type="entry name" value="Helical backbone' metal receptor"/>
    <property type="match status" value="1"/>
</dbReference>
<dbReference type="PROSITE" id="PS50983">
    <property type="entry name" value="FE_B12_PBP"/>
    <property type="match status" value="1"/>
</dbReference>
<organism>
    <name type="scientific">Yersinia pestis bv. Antiqua (strain Angola)</name>
    <dbReference type="NCBI Taxonomy" id="349746"/>
    <lineage>
        <taxon>Bacteria</taxon>
        <taxon>Pseudomonadati</taxon>
        <taxon>Pseudomonadota</taxon>
        <taxon>Gammaproteobacteria</taxon>
        <taxon>Enterobacterales</taxon>
        <taxon>Yersiniaceae</taxon>
        <taxon>Yersinia</taxon>
    </lineage>
</organism>
<proteinExistence type="inferred from homology"/>
<name>BTUF_YERPG</name>